<protein>
    <recommendedName>
        <fullName evidence="1">2-C-methyl-D-erythritol 2,4-cyclodiphosphate synthase</fullName>
        <shortName evidence="1">MECDP-synthase</shortName>
        <shortName evidence="1">MECPP-synthase</shortName>
        <shortName evidence="1">MECPS</shortName>
        <ecNumber evidence="1">4.6.1.12</ecNumber>
    </recommendedName>
</protein>
<name>ISPF_PHOLL</name>
<sequence length="157" mass="16935">MRIGHGFDVHKFGGEGPIIIGGVRIPYEQGLLAHSDGDVALHAATDALLGAAALGDIGKLFPDTDPAFKGVDSRKLLREAYSRIREKGYRIGNLDITIIAQAPKMLPHIPQMRVNLAEDLQCHIDDINVKATTTEKLGFVGRKEGIACEAVALLVKE</sequence>
<organism>
    <name type="scientific">Photorhabdus laumondii subsp. laumondii (strain DSM 15139 / CIP 105565 / TT01)</name>
    <name type="common">Photorhabdus luminescens subsp. laumondii</name>
    <dbReference type="NCBI Taxonomy" id="243265"/>
    <lineage>
        <taxon>Bacteria</taxon>
        <taxon>Pseudomonadati</taxon>
        <taxon>Pseudomonadota</taxon>
        <taxon>Gammaproteobacteria</taxon>
        <taxon>Enterobacterales</taxon>
        <taxon>Morganellaceae</taxon>
        <taxon>Photorhabdus</taxon>
    </lineage>
</organism>
<gene>
    <name evidence="1" type="primary">ispF</name>
    <name type="ordered locus">plu0714</name>
</gene>
<keyword id="KW-0414">Isoprene biosynthesis</keyword>
<keyword id="KW-0456">Lyase</keyword>
<keyword id="KW-0479">Metal-binding</keyword>
<keyword id="KW-1185">Reference proteome</keyword>
<feature type="chain" id="PRO_0000189491" description="2-C-methyl-D-erythritol 2,4-cyclodiphosphate synthase">
    <location>
        <begin position="1"/>
        <end position="157"/>
    </location>
</feature>
<feature type="binding site" evidence="1">
    <location>
        <begin position="8"/>
        <end position="10"/>
    </location>
    <ligand>
        <name>4-CDP-2-C-methyl-D-erythritol 2-phosphate</name>
        <dbReference type="ChEBI" id="CHEBI:57919"/>
    </ligand>
</feature>
<feature type="binding site" evidence="1">
    <location>
        <position position="8"/>
    </location>
    <ligand>
        <name>a divalent metal cation</name>
        <dbReference type="ChEBI" id="CHEBI:60240"/>
    </ligand>
</feature>
<feature type="binding site" evidence="1">
    <location>
        <position position="10"/>
    </location>
    <ligand>
        <name>a divalent metal cation</name>
        <dbReference type="ChEBI" id="CHEBI:60240"/>
    </ligand>
</feature>
<feature type="binding site" evidence="1">
    <location>
        <begin position="34"/>
        <end position="35"/>
    </location>
    <ligand>
        <name>4-CDP-2-C-methyl-D-erythritol 2-phosphate</name>
        <dbReference type="ChEBI" id="CHEBI:57919"/>
    </ligand>
</feature>
<feature type="binding site" evidence="1">
    <location>
        <position position="42"/>
    </location>
    <ligand>
        <name>a divalent metal cation</name>
        <dbReference type="ChEBI" id="CHEBI:60240"/>
    </ligand>
</feature>
<feature type="binding site" evidence="1">
    <location>
        <begin position="56"/>
        <end position="58"/>
    </location>
    <ligand>
        <name>4-CDP-2-C-methyl-D-erythritol 2-phosphate</name>
        <dbReference type="ChEBI" id="CHEBI:57919"/>
    </ligand>
</feature>
<feature type="binding site" evidence="1">
    <location>
        <begin position="61"/>
        <end position="65"/>
    </location>
    <ligand>
        <name>4-CDP-2-C-methyl-D-erythritol 2-phosphate</name>
        <dbReference type="ChEBI" id="CHEBI:57919"/>
    </ligand>
</feature>
<feature type="binding site" evidence="1">
    <location>
        <begin position="100"/>
        <end position="106"/>
    </location>
    <ligand>
        <name>4-CDP-2-C-methyl-D-erythritol 2-phosphate</name>
        <dbReference type="ChEBI" id="CHEBI:57919"/>
    </ligand>
</feature>
<feature type="binding site" evidence="1">
    <location>
        <begin position="132"/>
        <end position="135"/>
    </location>
    <ligand>
        <name>4-CDP-2-C-methyl-D-erythritol 2-phosphate</name>
        <dbReference type="ChEBI" id="CHEBI:57919"/>
    </ligand>
</feature>
<feature type="binding site" evidence="1">
    <location>
        <position position="139"/>
    </location>
    <ligand>
        <name>4-CDP-2-C-methyl-D-erythritol 2-phosphate</name>
        <dbReference type="ChEBI" id="CHEBI:57919"/>
    </ligand>
</feature>
<feature type="binding site" evidence="1">
    <location>
        <position position="142"/>
    </location>
    <ligand>
        <name>4-CDP-2-C-methyl-D-erythritol 2-phosphate</name>
        <dbReference type="ChEBI" id="CHEBI:57919"/>
    </ligand>
</feature>
<feature type="site" description="Transition state stabilizer" evidence="1">
    <location>
        <position position="34"/>
    </location>
</feature>
<feature type="site" description="Transition state stabilizer" evidence="1">
    <location>
        <position position="133"/>
    </location>
</feature>
<reference key="1">
    <citation type="journal article" date="2003" name="Nat. Biotechnol.">
        <title>The genome sequence of the entomopathogenic bacterium Photorhabdus luminescens.</title>
        <authorList>
            <person name="Duchaud E."/>
            <person name="Rusniok C."/>
            <person name="Frangeul L."/>
            <person name="Buchrieser C."/>
            <person name="Givaudan A."/>
            <person name="Taourit S."/>
            <person name="Bocs S."/>
            <person name="Boursaux-Eude C."/>
            <person name="Chandler M."/>
            <person name="Charles J.-F."/>
            <person name="Dassa E."/>
            <person name="Derose R."/>
            <person name="Derzelle S."/>
            <person name="Freyssinet G."/>
            <person name="Gaudriault S."/>
            <person name="Medigue C."/>
            <person name="Lanois A."/>
            <person name="Powell K."/>
            <person name="Siguier P."/>
            <person name="Vincent R."/>
            <person name="Wingate V."/>
            <person name="Zouine M."/>
            <person name="Glaser P."/>
            <person name="Boemare N."/>
            <person name="Danchin A."/>
            <person name="Kunst F."/>
        </authorList>
    </citation>
    <scope>NUCLEOTIDE SEQUENCE [LARGE SCALE GENOMIC DNA]</scope>
    <source>
        <strain>DSM 15139 / CIP 105565 / TT01</strain>
    </source>
</reference>
<accession>Q7N8K6</accession>
<evidence type="ECO:0000255" key="1">
    <source>
        <dbReference type="HAMAP-Rule" id="MF_00107"/>
    </source>
</evidence>
<dbReference type="EC" id="4.6.1.12" evidence="1"/>
<dbReference type="EMBL" id="BX571861">
    <property type="protein sequence ID" value="CAE13009.1"/>
    <property type="molecule type" value="Genomic_DNA"/>
</dbReference>
<dbReference type="RefSeq" id="WP_011145090.1">
    <property type="nucleotide sequence ID" value="NC_005126.1"/>
</dbReference>
<dbReference type="SMR" id="Q7N8K6"/>
<dbReference type="STRING" id="243265.plu0714"/>
<dbReference type="GeneID" id="48847009"/>
<dbReference type="KEGG" id="plu:plu0714"/>
<dbReference type="eggNOG" id="COG0245">
    <property type="taxonomic scope" value="Bacteria"/>
</dbReference>
<dbReference type="HOGENOM" id="CLU_084630_2_0_6"/>
<dbReference type="OrthoDB" id="9804336at2"/>
<dbReference type="UniPathway" id="UPA00056">
    <property type="reaction ID" value="UER00095"/>
</dbReference>
<dbReference type="Proteomes" id="UP000002514">
    <property type="component" value="Chromosome"/>
</dbReference>
<dbReference type="GO" id="GO:0008685">
    <property type="term" value="F:2-C-methyl-D-erythritol 2,4-cyclodiphosphate synthase activity"/>
    <property type="evidence" value="ECO:0007669"/>
    <property type="project" value="UniProtKB-UniRule"/>
</dbReference>
<dbReference type="GO" id="GO:0046872">
    <property type="term" value="F:metal ion binding"/>
    <property type="evidence" value="ECO:0007669"/>
    <property type="project" value="UniProtKB-KW"/>
</dbReference>
<dbReference type="GO" id="GO:0019288">
    <property type="term" value="P:isopentenyl diphosphate biosynthetic process, methylerythritol 4-phosphate pathway"/>
    <property type="evidence" value="ECO:0007669"/>
    <property type="project" value="UniProtKB-UniRule"/>
</dbReference>
<dbReference type="GO" id="GO:0016114">
    <property type="term" value="P:terpenoid biosynthetic process"/>
    <property type="evidence" value="ECO:0007669"/>
    <property type="project" value="InterPro"/>
</dbReference>
<dbReference type="CDD" id="cd00554">
    <property type="entry name" value="MECDP_synthase"/>
    <property type="match status" value="1"/>
</dbReference>
<dbReference type="FunFam" id="3.30.1330.50:FF:000001">
    <property type="entry name" value="2-C-methyl-D-erythritol 2,4-cyclodiphosphate synthase"/>
    <property type="match status" value="1"/>
</dbReference>
<dbReference type="Gene3D" id="3.30.1330.50">
    <property type="entry name" value="2-C-methyl-D-erythritol 2,4-cyclodiphosphate synthase"/>
    <property type="match status" value="1"/>
</dbReference>
<dbReference type="HAMAP" id="MF_00107">
    <property type="entry name" value="IspF"/>
    <property type="match status" value="1"/>
</dbReference>
<dbReference type="InterPro" id="IPR003526">
    <property type="entry name" value="MECDP_synthase"/>
</dbReference>
<dbReference type="InterPro" id="IPR020555">
    <property type="entry name" value="MECDP_synthase_CS"/>
</dbReference>
<dbReference type="InterPro" id="IPR036571">
    <property type="entry name" value="MECDP_synthase_sf"/>
</dbReference>
<dbReference type="NCBIfam" id="TIGR00151">
    <property type="entry name" value="ispF"/>
    <property type="match status" value="1"/>
</dbReference>
<dbReference type="PANTHER" id="PTHR43181">
    <property type="entry name" value="2-C-METHYL-D-ERYTHRITOL 2,4-CYCLODIPHOSPHATE SYNTHASE, CHLOROPLASTIC"/>
    <property type="match status" value="1"/>
</dbReference>
<dbReference type="PANTHER" id="PTHR43181:SF1">
    <property type="entry name" value="2-C-METHYL-D-ERYTHRITOL 2,4-CYCLODIPHOSPHATE SYNTHASE, CHLOROPLASTIC"/>
    <property type="match status" value="1"/>
</dbReference>
<dbReference type="Pfam" id="PF02542">
    <property type="entry name" value="YgbB"/>
    <property type="match status" value="1"/>
</dbReference>
<dbReference type="SUPFAM" id="SSF69765">
    <property type="entry name" value="IpsF-like"/>
    <property type="match status" value="1"/>
</dbReference>
<dbReference type="PROSITE" id="PS01350">
    <property type="entry name" value="ISPF"/>
    <property type="match status" value="1"/>
</dbReference>
<comment type="function">
    <text evidence="1">Involved in the biosynthesis of isopentenyl diphosphate (IPP) and dimethylallyl diphosphate (DMAPP), two major building blocks of isoprenoid compounds. Catalyzes the conversion of 4-diphosphocytidyl-2-C-methyl-D-erythritol 2-phosphate (CDP-ME2P) to 2-C-methyl-D-erythritol 2,4-cyclodiphosphate (ME-CPP) with a corresponding release of cytidine 5-monophosphate (CMP).</text>
</comment>
<comment type="catalytic activity">
    <reaction evidence="1">
        <text>4-CDP-2-C-methyl-D-erythritol 2-phosphate = 2-C-methyl-D-erythritol 2,4-cyclic diphosphate + CMP</text>
        <dbReference type="Rhea" id="RHEA:23864"/>
        <dbReference type="ChEBI" id="CHEBI:57919"/>
        <dbReference type="ChEBI" id="CHEBI:58483"/>
        <dbReference type="ChEBI" id="CHEBI:60377"/>
        <dbReference type="EC" id="4.6.1.12"/>
    </reaction>
</comment>
<comment type="cofactor">
    <cofactor evidence="1">
        <name>a divalent metal cation</name>
        <dbReference type="ChEBI" id="CHEBI:60240"/>
    </cofactor>
    <text evidence="1">Binds 1 divalent metal cation per subunit.</text>
</comment>
<comment type="pathway">
    <text evidence="1">Isoprenoid biosynthesis; isopentenyl diphosphate biosynthesis via DXP pathway; isopentenyl diphosphate from 1-deoxy-D-xylulose 5-phosphate: step 4/6.</text>
</comment>
<comment type="subunit">
    <text evidence="1">Homotrimer.</text>
</comment>
<comment type="similarity">
    <text evidence="1">Belongs to the IspF family.</text>
</comment>
<proteinExistence type="inferred from homology"/>